<proteinExistence type="evidence at protein level"/>
<gene>
    <name evidence="8" type="primary">LAP1</name>
    <name evidence="7" type="synonym">PM25</name>
    <name type="ordered locus">At2g24200</name>
    <name type="ORF">F27D4.11</name>
</gene>
<reference key="1">
    <citation type="journal article" date="1992" name="Eur. J. Biochem.">
        <title>Leucine aminopeptidase from Arabidopsis thaliana. Molecular evidence for a phylogenetically conserved enzyme of protein turnover in higher plants.</title>
        <authorList>
            <person name="Bartling D."/>
            <person name="Weiler E.W."/>
        </authorList>
    </citation>
    <scope>NUCLEOTIDE SEQUENCE [MRNA]</scope>
    <scope>FUNCTION</scope>
    <scope>CATALYTIC ACTIVITY</scope>
    <scope>COFACTOR</scope>
    <scope>BIOPHYSICOCHEMICAL PROPERTIES</scope>
    <source>
        <strain>cv. Landsberg erecta</strain>
        <tissue>Leaf</tissue>
    </source>
</reference>
<reference key="2">
    <citation type="journal article" date="1999" name="Nature">
        <title>Sequence and analysis of chromosome 2 of the plant Arabidopsis thaliana.</title>
        <authorList>
            <person name="Lin X."/>
            <person name="Kaul S."/>
            <person name="Rounsley S.D."/>
            <person name="Shea T.P."/>
            <person name="Benito M.-I."/>
            <person name="Town C.D."/>
            <person name="Fujii C.Y."/>
            <person name="Mason T.M."/>
            <person name="Bowman C.L."/>
            <person name="Barnstead M.E."/>
            <person name="Feldblyum T.V."/>
            <person name="Buell C.R."/>
            <person name="Ketchum K.A."/>
            <person name="Lee J.J."/>
            <person name="Ronning C.M."/>
            <person name="Koo H.L."/>
            <person name="Moffat K.S."/>
            <person name="Cronin L.A."/>
            <person name="Shen M."/>
            <person name="Pai G."/>
            <person name="Van Aken S."/>
            <person name="Umayam L."/>
            <person name="Tallon L.J."/>
            <person name="Gill J.E."/>
            <person name="Adams M.D."/>
            <person name="Carrera A.J."/>
            <person name="Creasy T.H."/>
            <person name="Goodman H.M."/>
            <person name="Somerville C.R."/>
            <person name="Copenhaver G.P."/>
            <person name="Preuss D."/>
            <person name="Nierman W.C."/>
            <person name="White O."/>
            <person name="Eisen J.A."/>
            <person name="Salzberg S.L."/>
            <person name="Fraser C.M."/>
            <person name="Venter J.C."/>
        </authorList>
    </citation>
    <scope>NUCLEOTIDE SEQUENCE [LARGE SCALE GENOMIC DNA]</scope>
    <source>
        <strain>cv. Columbia</strain>
    </source>
</reference>
<reference key="3">
    <citation type="journal article" date="2017" name="Plant J.">
        <title>Araport11: a complete reannotation of the Arabidopsis thaliana reference genome.</title>
        <authorList>
            <person name="Cheng C.Y."/>
            <person name="Krishnakumar V."/>
            <person name="Chan A.P."/>
            <person name="Thibaud-Nissen F."/>
            <person name="Schobel S."/>
            <person name="Town C.D."/>
        </authorList>
    </citation>
    <scope>GENOME REANNOTATION</scope>
    <source>
        <strain>cv. Columbia</strain>
    </source>
</reference>
<reference key="4">
    <citation type="journal article" date="2003" name="Science">
        <title>Empirical analysis of transcriptional activity in the Arabidopsis genome.</title>
        <authorList>
            <person name="Yamada K."/>
            <person name="Lim J."/>
            <person name="Dale J.M."/>
            <person name="Chen H."/>
            <person name="Shinn P."/>
            <person name="Palm C.J."/>
            <person name="Southwick A.M."/>
            <person name="Wu H.C."/>
            <person name="Kim C.J."/>
            <person name="Nguyen M."/>
            <person name="Pham P.K."/>
            <person name="Cheuk R.F."/>
            <person name="Karlin-Newmann G."/>
            <person name="Liu S.X."/>
            <person name="Lam B."/>
            <person name="Sakano H."/>
            <person name="Wu T."/>
            <person name="Yu G."/>
            <person name="Miranda M."/>
            <person name="Quach H.L."/>
            <person name="Tripp M."/>
            <person name="Chang C.H."/>
            <person name="Lee J.M."/>
            <person name="Toriumi M.J."/>
            <person name="Chan M.M."/>
            <person name="Tang C.C."/>
            <person name="Onodera C.S."/>
            <person name="Deng J.M."/>
            <person name="Akiyama K."/>
            <person name="Ansari Y."/>
            <person name="Arakawa T."/>
            <person name="Banh J."/>
            <person name="Banno F."/>
            <person name="Bowser L."/>
            <person name="Brooks S.Y."/>
            <person name="Carninci P."/>
            <person name="Chao Q."/>
            <person name="Choy N."/>
            <person name="Enju A."/>
            <person name="Goldsmith A.D."/>
            <person name="Gurjal M."/>
            <person name="Hansen N.F."/>
            <person name="Hayashizaki Y."/>
            <person name="Johnson-Hopson C."/>
            <person name="Hsuan V.W."/>
            <person name="Iida K."/>
            <person name="Karnes M."/>
            <person name="Khan S."/>
            <person name="Koesema E."/>
            <person name="Ishida J."/>
            <person name="Jiang P.X."/>
            <person name="Jones T."/>
            <person name="Kawai J."/>
            <person name="Kamiya A."/>
            <person name="Meyers C."/>
            <person name="Nakajima M."/>
            <person name="Narusaka M."/>
            <person name="Seki M."/>
            <person name="Sakurai T."/>
            <person name="Satou M."/>
            <person name="Tamse R."/>
            <person name="Vaysberg M."/>
            <person name="Wallender E.K."/>
            <person name="Wong C."/>
            <person name="Yamamura Y."/>
            <person name="Yuan S."/>
            <person name="Shinozaki K."/>
            <person name="Davis R.W."/>
            <person name="Theologis A."/>
            <person name="Ecker J.R."/>
        </authorList>
    </citation>
    <scope>NUCLEOTIDE SEQUENCE [LARGE SCALE MRNA]</scope>
    <source>
        <strain>cv. Columbia</strain>
    </source>
</reference>
<reference key="5">
    <citation type="journal article" date="2007" name="Mol. Cell. Proteomics">
        <title>Multidimensional protein identification technology (MudPIT) analysis of ubiquitinated proteins in plants.</title>
        <authorList>
            <person name="Maor R."/>
            <person name="Jones A."/>
            <person name="Nuehse T.S."/>
            <person name="Studholme D.J."/>
            <person name="Peck S.C."/>
            <person name="Shirasu K."/>
        </authorList>
    </citation>
    <scope>IDENTIFICATION BY MASS SPECTROMETRY [LARGE SCALE ANALYSIS]</scope>
    <source>
        <strain>cv. Landsberg erecta</strain>
    </source>
</reference>
<reference key="6">
    <citation type="journal article" date="2009" name="J. Proteomics">
        <title>Phosphoproteomic analysis of nuclei-enriched fractions from Arabidopsis thaliana.</title>
        <authorList>
            <person name="Jones A.M.E."/>
            <person name="MacLean D."/>
            <person name="Studholme D.J."/>
            <person name="Serna-Sanz A."/>
            <person name="Andreasson E."/>
            <person name="Rathjen J.P."/>
            <person name="Peck S.C."/>
        </authorList>
    </citation>
    <scope>IDENTIFICATION BY MASS SPECTROMETRY [LARGE SCALE ANALYSIS]</scope>
    <source>
        <strain>cv. Columbia</strain>
    </source>
</reference>
<reference key="7">
    <citation type="journal article" date="2012" name="J. Biol. Chem.">
        <title>Plant leucine aminopeptidases moonlight as molecular chaperones to alleviate stress-induced damage.</title>
        <authorList>
            <person name="Scranton M.A."/>
            <person name="Yee A."/>
            <person name="Park S.-Y."/>
            <person name="Walling L.L."/>
        </authorList>
    </citation>
    <scope>FUNCTION</scope>
    <source>
        <strain>cv. Columbia</strain>
    </source>
</reference>
<reference key="8">
    <citation type="journal article" date="2015" name="Biochem. J.">
        <title>Defining the cytosolic pathway of glutathione degradation in Arabidopsis thaliana: role of the ChaC/GCG family of gamma-glutamyl cyclotransferases as glutathione-degrading enzymes and AtLAP1 as the Cys-Gly peptidase.</title>
        <authorList>
            <person name="Kumar S."/>
            <person name="Kaur A."/>
            <person name="Chattopadhyay B."/>
            <person name="Bachhawat A.K."/>
        </authorList>
    </citation>
    <scope>FUNCTION</scope>
    <scope>COFACTOR</scope>
    <scope>BIOPHYSICOCHEMICAL PROPERTIES</scope>
</reference>
<organism>
    <name type="scientific">Arabidopsis thaliana</name>
    <name type="common">Mouse-ear cress</name>
    <dbReference type="NCBI Taxonomy" id="3702"/>
    <lineage>
        <taxon>Eukaryota</taxon>
        <taxon>Viridiplantae</taxon>
        <taxon>Streptophyta</taxon>
        <taxon>Embryophyta</taxon>
        <taxon>Tracheophyta</taxon>
        <taxon>Spermatophyta</taxon>
        <taxon>Magnoliopsida</taxon>
        <taxon>eudicotyledons</taxon>
        <taxon>Gunneridae</taxon>
        <taxon>Pentapetalae</taxon>
        <taxon>rosids</taxon>
        <taxon>malvids</taxon>
        <taxon>Brassicales</taxon>
        <taxon>Brassicaceae</taxon>
        <taxon>Camelineae</taxon>
        <taxon>Arabidopsis</taxon>
    </lineage>
</organism>
<keyword id="KW-0025">Alternative splicing</keyword>
<keyword id="KW-0031">Aminopeptidase</keyword>
<keyword id="KW-0143">Chaperone</keyword>
<keyword id="KW-0963">Cytoplasm</keyword>
<keyword id="KW-0378">Hydrolase</keyword>
<keyword id="KW-0464">Manganese</keyword>
<keyword id="KW-0479">Metal-binding</keyword>
<keyword id="KW-0645">Protease</keyword>
<keyword id="KW-1185">Reference proteome</keyword>
<keyword id="KW-0346">Stress response</keyword>
<comment type="function">
    <text evidence="5 6 10">Presumably involved in the processing and regular turnover of intracellular proteins. Catalyzes the removal of unsubstituted N-terminal amino acids from various peptides (Probable). Possesses leucine aminopeptidase activity against the model substrate leucine-amido methyl coumarin (PubMed:22493451). Possesses Cys-Gly dipeptidase activity. In addition, can cleave Cys-Leu and Leu-Cys dipeptides (PubMed:25716890).</text>
</comment>
<comment type="function">
    <text evidence="5">Functions as a molecular chaperone to protect proteins from heat-induced damage.</text>
</comment>
<comment type="catalytic activity">
    <reaction evidence="4">
        <text>Release of an N-terminal amino acid, Xaa-|-Yaa-, in which Xaa is preferably Leu, but may be other amino acids including Pro although not Arg or Lys, and Yaa may be Pro. Amino acid amides and methyl esters are also readily hydrolyzed, but rates on arylamides are exceedingly low.</text>
        <dbReference type="EC" id="3.4.11.1"/>
    </reaction>
</comment>
<comment type="catalytic activity">
    <reaction evidence="1">
        <text>Release of N-terminal proline from a peptide.</text>
        <dbReference type="EC" id="3.4.11.5"/>
    </reaction>
</comment>
<comment type="cofactor">
    <cofactor evidence="4 6">
        <name>Mn(2+)</name>
        <dbReference type="ChEBI" id="CHEBI:29035"/>
    </cofactor>
    <text evidence="10">Binds 2 Mn(2+) ions per subunit.</text>
</comment>
<comment type="biophysicochemical properties">
    <kinetics>
        <KM evidence="4">0.5 mM for L-leucine-p-nitroanilide</KM>
        <KM evidence="6">1.3 mM for Cys-Gly dipeptide</KM>
        <KM evidence="6">1.1 mM for Cys-Leu dipeptide</KM>
        <KM evidence="6">2.4 mM for Leu-Cys dipeptide</KM>
    </kinetics>
    <phDependence>
        <text evidence="4">Optimum pH is 8.5 for leucine aminopeptidase activity.</text>
    </phDependence>
</comment>
<comment type="subunit">
    <text evidence="2">Homohexamer (dimer of homotrimers).</text>
</comment>
<comment type="subcellular location">
    <subcellularLocation>
        <location>Cytoplasm</location>
    </subcellularLocation>
</comment>
<comment type="alternative products">
    <event type="alternative splicing"/>
    <isoform>
        <id>P30184-1</id>
        <name>1</name>
        <sequence type="displayed"/>
    </isoform>
    <text>A number of isoforms are produced. According to EST sequences.</text>
</comment>
<comment type="similarity">
    <text evidence="9">Belongs to the peptidase M17 family.</text>
</comment>
<sequence>MAHTLGLTQPNSTEPHKISFTAKEIDVIEWKGDILVVGVTEKDLAKDGNSKFENPILSKVDAHLSGLLAQVSSEEDFTGKPGQSTVLRLPGLGSKRIALIGLGQSVSSPVAFHSLGEAVATVSKASQSTSAAIVLASSVSDESKLSSVSALASGIVLGLFEDGRYKSESKKPSLKAVDIIGFGTGAEVEKKLKYAEDVSYGVIFGRELINSPANVLTPAVLAEEAAKVASTYSDVFTANILNEEQCKELKMGSYLAVAAASANPPHFIHLVYKPPNGSVKTKLALVGKGLTFDSGGYNIKTGPGCSIELMKFDMGGSAAVLGAAKAIGEIKPPGVEVHFIVAACENMISGTGMRPGDVITASNGKTIEVNNTDAEGRLTLADALVYACNQGVDKIVDLATLTGACVIALGTSMAGIYTPSDELAKEVIAASERSGEKLWRMPLEESYWEMMKSGVADMVNTGGRAGGSITAALFLKQFVSEKVQWMHIDMAGPVWNEKKKSGTGFGVATLVEWVQKNSSS</sequence>
<evidence type="ECO:0000250" key="1">
    <source>
        <dbReference type="UniProtKB" id="P28839"/>
    </source>
</evidence>
<evidence type="ECO:0000250" key="2">
    <source>
        <dbReference type="UniProtKB" id="Q10712"/>
    </source>
</evidence>
<evidence type="ECO:0000255" key="3"/>
<evidence type="ECO:0000269" key="4">
    <source>
    </source>
</evidence>
<evidence type="ECO:0000269" key="5">
    <source>
    </source>
</evidence>
<evidence type="ECO:0000269" key="6">
    <source>
    </source>
</evidence>
<evidence type="ECO:0000303" key="7">
    <source>
    </source>
</evidence>
<evidence type="ECO:0000303" key="8">
    <source>
    </source>
</evidence>
<evidence type="ECO:0000305" key="9"/>
<evidence type="ECO:0000305" key="10">
    <source>
    </source>
</evidence>
<protein>
    <recommendedName>
        <fullName>Leucine aminopeptidase 1</fullName>
        <ecNumber evidence="4">3.4.11.1</ecNumber>
    </recommendedName>
    <alternativeName>
        <fullName>Leucyl aminopeptidase 1</fullName>
        <shortName evidence="8">AtLAP1</shortName>
    </alternativeName>
    <alternativeName>
        <fullName>Proline aminopeptidase 1</fullName>
        <ecNumber evidence="1">3.4.11.5</ecNumber>
    </alternativeName>
    <alternativeName>
        <fullName>Prolyl aminopeptidase 1</fullName>
    </alternativeName>
</protein>
<accession>P30184</accession>
<name>AMPL1_ARATH</name>
<feature type="chain" id="PRO_0000165823" description="Leucine aminopeptidase 1">
    <location>
        <begin position="1"/>
        <end position="520"/>
    </location>
</feature>
<feature type="active site" evidence="3">
    <location>
        <position position="300"/>
    </location>
</feature>
<feature type="active site" evidence="3">
    <location>
        <position position="377"/>
    </location>
</feature>
<feature type="binding site" evidence="10">
    <location>
        <position position="288"/>
    </location>
    <ligand>
        <name>Mn(2+)</name>
        <dbReference type="ChEBI" id="CHEBI:29035"/>
        <label>1</label>
    </ligand>
</feature>
<feature type="binding site" evidence="10">
    <location>
        <position position="293"/>
    </location>
    <ligand>
        <name>Mn(2+)</name>
        <dbReference type="ChEBI" id="CHEBI:29035"/>
        <label>1</label>
    </ligand>
</feature>
<feature type="binding site" evidence="10">
    <location>
        <position position="293"/>
    </location>
    <ligand>
        <name>Mn(2+)</name>
        <dbReference type="ChEBI" id="CHEBI:29035"/>
        <label>2</label>
    </ligand>
</feature>
<feature type="binding site" evidence="10">
    <location>
        <position position="313"/>
    </location>
    <ligand>
        <name>Mn(2+)</name>
        <dbReference type="ChEBI" id="CHEBI:29035"/>
        <label>1</label>
    </ligand>
</feature>
<feature type="binding site" evidence="10">
    <location>
        <position position="373"/>
    </location>
    <ligand>
        <name>Mn(2+)</name>
        <dbReference type="ChEBI" id="CHEBI:29035"/>
        <label>2</label>
    </ligand>
</feature>
<feature type="binding site" evidence="10">
    <location>
        <position position="375"/>
    </location>
    <ligand>
        <name>Mn(2+)</name>
        <dbReference type="ChEBI" id="CHEBI:29035"/>
        <label>1</label>
    </ligand>
</feature>
<feature type="binding site" evidence="10">
    <location>
        <position position="375"/>
    </location>
    <ligand>
        <name>Mn(2+)</name>
        <dbReference type="ChEBI" id="CHEBI:29035"/>
        <label>2</label>
    </ligand>
</feature>
<dbReference type="EC" id="3.4.11.1" evidence="4"/>
<dbReference type="EC" id="3.4.11.5" evidence="1"/>
<dbReference type="EMBL" id="X63444">
    <property type="protein sequence ID" value="CAA45040.1"/>
    <property type="molecule type" value="mRNA"/>
</dbReference>
<dbReference type="EMBL" id="AC005967">
    <property type="protein sequence ID" value="AAD03381.1"/>
    <property type="molecule type" value="Genomic_DNA"/>
</dbReference>
<dbReference type="EMBL" id="CP002685">
    <property type="protein sequence ID" value="AEC07539.1"/>
    <property type="molecule type" value="Genomic_DNA"/>
</dbReference>
<dbReference type="EMBL" id="CP002685">
    <property type="protein sequence ID" value="AEC07540.1"/>
    <property type="molecule type" value="Genomic_DNA"/>
</dbReference>
<dbReference type="EMBL" id="AY062105">
    <property type="protein sequence ID" value="AAL32980.1"/>
    <property type="molecule type" value="mRNA"/>
</dbReference>
<dbReference type="EMBL" id="BT006345">
    <property type="protein sequence ID" value="AAP21153.1"/>
    <property type="molecule type" value="mRNA"/>
</dbReference>
<dbReference type="PIR" id="S22399">
    <property type="entry name" value="S22399"/>
</dbReference>
<dbReference type="RefSeq" id="NP_001118375.1">
    <molecule id="P30184-1"/>
    <property type="nucleotide sequence ID" value="NM_001124903.1"/>
</dbReference>
<dbReference type="RefSeq" id="NP_179997.1">
    <molecule id="P30184-1"/>
    <property type="nucleotide sequence ID" value="NM_127981.4"/>
</dbReference>
<dbReference type="SMR" id="P30184"/>
<dbReference type="BioGRID" id="2306">
    <property type="interactions" value="8"/>
</dbReference>
<dbReference type="FunCoup" id="P30184">
    <property type="interactions" value="2149"/>
</dbReference>
<dbReference type="STRING" id="3702.P30184"/>
<dbReference type="MEROPS" id="M17.A03"/>
<dbReference type="iPTMnet" id="P30184"/>
<dbReference type="MetOSite" id="P30184"/>
<dbReference type="PaxDb" id="3702-AT2G24200.1"/>
<dbReference type="ProteomicsDB" id="244873">
    <molecule id="P30184-1"/>
</dbReference>
<dbReference type="EnsemblPlants" id="AT2G24200.1">
    <molecule id="P30184-1"/>
    <property type="protein sequence ID" value="AT2G24200.1"/>
    <property type="gene ID" value="AT2G24200"/>
</dbReference>
<dbReference type="EnsemblPlants" id="AT2G24200.2">
    <molecule id="P30184-1"/>
    <property type="protein sequence ID" value="AT2G24200.2"/>
    <property type="gene ID" value="AT2G24200"/>
</dbReference>
<dbReference type="GeneID" id="816954"/>
<dbReference type="Gramene" id="AT2G24200.1">
    <molecule id="P30184-1"/>
    <property type="protein sequence ID" value="AT2G24200.1"/>
    <property type="gene ID" value="AT2G24200"/>
</dbReference>
<dbReference type="Gramene" id="AT2G24200.2">
    <molecule id="P30184-1"/>
    <property type="protein sequence ID" value="AT2G24200.2"/>
    <property type="gene ID" value="AT2G24200"/>
</dbReference>
<dbReference type="KEGG" id="ath:AT2G24200"/>
<dbReference type="Araport" id="AT2G24200"/>
<dbReference type="TAIR" id="AT2G24200">
    <property type="gene designation" value="LAP1"/>
</dbReference>
<dbReference type="eggNOG" id="KOG2597">
    <property type="taxonomic scope" value="Eukaryota"/>
</dbReference>
<dbReference type="InParanoid" id="P30184"/>
<dbReference type="OMA" id="MPLWKYF"/>
<dbReference type="PhylomeDB" id="P30184"/>
<dbReference type="SABIO-RK" id="P30184"/>
<dbReference type="CD-CODE" id="4299E36E">
    <property type="entry name" value="Nucleolus"/>
</dbReference>
<dbReference type="PRO" id="PR:P30184"/>
<dbReference type="Proteomes" id="UP000006548">
    <property type="component" value="Chromosome 2"/>
</dbReference>
<dbReference type="ExpressionAtlas" id="P30184">
    <property type="expression patterns" value="baseline and differential"/>
</dbReference>
<dbReference type="GO" id="GO:0009570">
    <property type="term" value="C:chloroplast stroma"/>
    <property type="evidence" value="ECO:0007005"/>
    <property type="project" value="TAIR"/>
</dbReference>
<dbReference type="GO" id="GO:0005829">
    <property type="term" value="C:cytosol"/>
    <property type="evidence" value="ECO:0007005"/>
    <property type="project" value="TAIR"/>
</dbReference>
<dbReference type="GO" id="GO:0005773">
    <property type="term" value="C:vacuole"/>
    <property type="evidence" value="ECO:0007005"/>
    <property type="project" value="TAIR"/>
</dbReference>
<dbReference type="GO" id="GO:0004177">
    <property type="term" value="F:aminopeptidase activity"/>
    <property type="evidence" value="ECO:0000314"/>
    <property type="project" value="UniProtKB"/>
</dbReference>
<dbReference type="GO" id="GO:0016805">
    <property type="term" value="F:dipeptidase activity"/>
    <property type="evidence" value="ECO:0000314"/>
    <property type="project" value="UniProtKB"/>
</dbReference>
<dbReference type="GO" id="GO:0030145">
    <property type="term" value="F:manganese ion binding"/>
    <property type="evidence" value="ECO:0000314"/>
    <property type="project" value="UniProtKB"/>
</dbReference>
<dbReference type="GO" id="GO:0070006">
    <property type="term" value="F:metalloaminopeptidase activity"/>
    <property type="evidence" value="ECO:0007669"/>
    <property type="project" value="InterPro"/>
</dbReference>
<dbReference type="GO" id="GO:0044183">
    <property type="term" value="F:protein folding chaperone"/>
    <property type="evidence" value="ECO:0000314"/>
    <property type="project" value="UniProtKB"/>
</dbReference>
<dbReference type="GO" id="GO:0034605">
    <property type="term" value="P:cellular response to heat"/>
    <property type="evidence" value="ECO:0000314"/>
    <property type="project" value="UniProtKB"/>
</dbReference>
<dbReference type="GO" id="GO:0006508">
    <property type="term" value="P:proteolysis"/>
    <property type="evidence" value="ECO:0007669"/>
    <property type="project" value="UniProtKB-KW"/>
</dbReference>
<dbReference type="CDD" id="cd00433">
    <property type="entry name" value="Peptidase_M17"/>
    <property type="match status" value="1"/>
</dbReference>
<dbReference type="FunFam" id="3.40.220.10:FF:000011">
    <property type="entry name" value="Leucine aminopeptidase 2, chloroplastic"/>
    <property type="match status" value="1"/>
</dbReference>
<dbReference type="FunFam" id="3.40.630.10:FF:000033">
    <property type="entry name" value="M17 leucyl aminopeptidase"/>
    <property type="match status" value="1"/>
</dbReference>
<dbReference type="Gene3D" id="3.40.220.10">
    <property type="entry name" value="Leucine Aminopeptidase, subunit E, domain 1"/>
    <property type="match status" value="1"/>
</dbReference>
<dbReference type="Gene3D" id="3.40.630.10">
    <property type="entry name" value="Zn peptidases"/>
    <property type="match status" value="1"/>
</dbReference>
<dbReference type="HAMAP" id="MF_00181">
    <property type="entry name" value="Cytosol_peptidase_M17"/>
    <property type="match status" value="1"/>
</dbReference>
<dbReference type="InterPro" id="IPR011356">
    <property type="entry name" value="Leucine_aapep/pepB"/>
</dbReference>
<dbReference type="InterPro" id="IPR043472">
    <property type="entry name" value="Macro_dom-like"/>
</dbReference>
<dbReference type="InterPro" id="IPR000819">
    <property type="entry name" value="Peptidase_M17_C"/>
</dbReference>
<dbReference type="InterPro" id="IPR023042">
    <property type="entry name" value="Peptidase_M17_leu_NH2_pept"/>
</dbReference>
<dbReference type="InterPro" id="IPR008283">
    <property type="entry name" value="Peptidase_M17_N"/>
</dbReference>
<dbReference type="NCBIfam" id="NF002076">
    <property type="entry name" value="PRK00913.2-3"/>
    <property type="match status" value="1"/>
</dbReference>
<dbReference type="PANTHER" id="PTHR11963:SF36">
    <property type="entry name" value="LEUCINE AMINOPEPTIDASE 1"/>
    <property type="match status" value="1"/>
</dbReference>
<dbReference type="PANTHER" id="PTHR11963">
    <property type="entry name" value="LEUCINE AMINOPEPTIDASE-RELATED"/>
    <property type="match status" value="1"/>
</dbReference>
<dbReference type="Pfam" id="PF00883">
    <property type="entry name" value="Peptidase_M17"/>
    <property type="match status" value="1"/>
</dbReference>
<dbReference type="Pfam" id="PF02789">
    <property type="entry name" value="Peptidase_M17_N"/>
    <property type="match status" value="1"/>
</dbReference>
<dbReference type="PRINTS" id="PR00481">
    <property type="entry name" value="LAMNOPPTDASE"/>
</dbReference>
<dbReference type="SUPFAM" id="SSF52949">
    <property type="entry name" value="Macro domain-like"/>
    <property type="match status" value="1"/>
</dbReference>
<dbReference type="SUPFAM" id="SSF53187">
    <property type="entry name" value="Zn-dependent exopeptidases"/>
    <property type="match status" value="1"/>
</dbReference>
<dbReference type="PROSITE" id="PS00631">
    <property type="entry name" value="CYTOSOL_AP"/>
    <property type="match status" value="1"/>
</dbReference>